<organism>
    <name type="scientific">Lactococcus lactis subsp. cremoris (strain SK11)</name>
    <dbReference type="NCBI Taxonomy" id="272622"/>
    <lineage>
        <taxon>Bacteria</taxon>
        <taxon>Bacillati</taxon>
        <taxon>Bacillota</taxon>
        <taxon>Bacilli</taxon>
        <taxon>Lactobacillales</taxon>
        <taxon>Streptococcaceae</taxon>
        <taxon>Lactococcus</taxon>
        <taxon>Lactococcus cremoris subsp. cremoris</taxon>
    </lineage>
</organism>
<sequence length="262" mass="28619">MSQLQEMMTVVSQREAAYNIFEMVLKGTLVDEMDLPGQFLHLAVSNGAMLLRRPISISSWDKRAKTCTILYRIGDETTGTYELSKLEPGAKVDIMGPLGNGFPVAEVTSTDKILIIGGGIGVPPLYELAKQLEKTGCQMTILLGFASENVKILENEFSNLKNVTLKIATDDGSYGTKGHVGMLMNEIDFEADALYTCGAPAMLKAVAKKYDQLERLYISMESRMACGIGACYACVEHDKEDESHALKVCEDGPVFLGKQLSL</sequence>
<keyword id="KW-0001">2Fe-2S</keyword>
<keyword id="KW-0249">Electron transport</keyword>
<keyword id="KW-0274">FAD</keyword>
<keyword id="KW-0285">Flavoprotein</keyword>
<keyword id="KW-0408">Iron</keyword>
<keyword id="KW-0411">Iron-sulfur</keyword>
<keyword id="KW-0479">Metal-binding</keyword>
<keyword id="KW-0665">Pyrimidine biosynthesis</keyword>
<keyword id="KW-0813">Transport</keyword>
<comment type="function">
    <text evidence="1">Responsible for channeling the electrons from the oxidation of dihydroorotate from the FMN redox center in the PyrD type B subunit to the ultimate electron acceptor NAD(+).</text>
</comment>
<comment type="cofactor">
    <cofactor evidence="1">
        <name>[2Fe-2S] cluster</name>
        <dbReference type="ChEBI" id="CHEBI:190135"/>
    </cofactor>
    <text evidence="1">Binds 1 [2Fe-2S] cluster per subunit.</text>
</comment>
<comment type="cofactor">
    <cofactor evidence="1">
        <name>FAD</name>
        <dbReference type="ChEBI" id="CHEBI:57692"/>
    </cofactor>
    <text evidence="1">Binds 1 FAD per subunit.</text>
</comment>
<comment type="pathway">
    <text evidence="1">Pyrimidine metabolism; UMP biosynthesis via de novo pathway; orotate from (S)-dihydroorotate (NAD(+) route): step 1/1.</text>
</comment>
<comment type="subunit">
    <text evidence="1">Heterotetramer of 2 PyrK and 2 PyrD type B subunits.</text>
</comment>
<comment type="similarity">
    <text evidence="1">Belongs to the PyrK family.</text>
</comment>
<evidence type="ECO:0000255" key="1">
    <source>
        <dbReference type="HAMAP-Rule" id="MF_01211"/>
    </source>
</evidence>
<proteinExistence type="inferred from homology"/>
<name>PYRK_LACLS</name>
<accession>Q02YJ2</accession>
<feature type="chain" id="PRO_1000066404" description="Dihydroorotate dehydrogenase B (NAD(+)), electron transfer subunit">
    <location>
        <begin position="1"/>
        <end position="262"/>
    </location>
</feature>
<feature type="domain" description="FAD-binding FR-type" evidence="1">
    <location>
        <begin position="3"/>
        <end position="104"/>
    </location>
</feature>
<feature type="binding site" evidence="1">
    <location>
        <begin position="53"/>
        <end position="56"/>
    </location>
    <ligand>
        <name>FAD</name>
        <dbReference type="ChEBI" id="CHEBI:57692"/>
    </ligand>
</feature>
<feature type="binding site" evidence="1">
    <location>
        <begin position="70"/>
        <end position="72"/>
    </location>
    <ligand>
        <name>FAD</name>
        <dbReference type="ChEBI" id="CHEBI:57692"/>
    </ligand>
</feature>
<feature type="binding site" evidence="1">
    <location>
        <begin position="79"/>
        <end position="80"/>
    </location>
    <ligand>
        <name>FAD</name>
        <dbReference type="ChEBI" id="CHEBI:57692"/>
    </ligand>
</feature>
<feature type="binding site" evidence="1">
    <location>
        <position position="226"/>
    </location>
    <ligand>
        <name>[2Fe-2S] cluster</name>
        <dbReference type="ChEBI" id="CHEBI:190135"/>
    </ligand>
</feature>
<feature type="binding site" evidence="1">
    <location>
        <position position="231"/>
    </location>
    <ligand>
        <name>[2Fe-2S] cluster</name>
        <dbReference type="ChEBI" id="CHEBI:190135"/>
    </ligand>
</feature>
<feature type="binding site" evidence="1">
    <location>
        <position position="234"/>
    </location>
    <ligand>
        <name>[2Fe-2S] cluster</name>
        <dbReference type="ChEBI" id="CHEBI:190135"/>
    </ligand>
</feature>
<feature type="binding site" evidence="1">
    <location>
        <position position="249"/>
    </location>
    <ligand>
        <name>[2Fe-2S] cluster</name>
        <dbReference type="ChEBI" id="CHEBI:190135"/>
    </ligand>
</feature>
<dbReference type="EMBL" id="CP000425">
    <property type="protein sequence ID" value="ABJ72980.1"/>
    <property type="molecule type" value="Genomic_DNA"/>
</dbReference>
<dbReference type="RefSeq" id="WP_011676341.1">
    <property type="nucleotide sequence ID" value="NC_008527.1"/>
</dbReference>
<dbReference type="SMR" id="Q02YJ2"/>
<dbReference type="KEGG" id="llc:LACR_1470"/>
<dbReference type="HOGENOM" id="CLU_003827_1_2_9"/>
<dbReference type="UniPathway" id="UPA00070">
    <property type="reaction ID" value="UER00945"/>
</dbReference>
<dbReference type="Proteomes" id="UP000000240">
    <property type="component" value="Chromosome"/>
</dbReference>
<dbReference type="GO" id="GO:0051537">
    <property type="term" value="F:2 iron, 2 sulfur cluster binding"/>
    <property type="evidence" value="ECO:0007669"/>
    <property type="project" value="UniProtKB-KW"/>
</dbReference>
<dbReference type="GO" id="GO:0009055">
    <property type="term" value="F:electron transfer activity"/>
    <property type="evidence" value="ECO:0007669"/>
    <property type="project" value="UniProtKB-UniRule"/>
</dbReference>
<dbReference type="GO" id="GO:0050660">
    <property type="term" value="F:flavin adenine dinucleotide binding"/>
    <property type="evidence" value="ECO:0007669"/>
    <property type="project" value="InterPro"/>
</dbReference>
<dbReference type="GO" id="GO:0046872">
    <property type="term" value="F:metal ion binding"/>
    <property type="evidence" value="ECO:0007669"/>
    <property type="project" value="UniProtKB-KW"/>
</dbReference>
<dbReference type="GO" id="GO:0016491">
    <property type="term" value="F:oxidoreductase activity"/>
    <property type="evidence" value="ECO:0007669"/>
    <property type="project" value="InterPro"/>
</dbReference>
<dbReference type="GO" id="GO:0044205">
    <property type="term" value="P:'de novo' UMP biosynthetic process"/>
    <property type="evidence" value="ECO:0007669"/>
    <property type="project" value="UniProtKB-UniRule"/>
</dbReference>
<dbReference type="CDD" id="cd06218">
    <property type="entry name" value="DHOD_e_trans"/>
    <property type="match status" value="1"/>
</dbReference>
<dbReference type="FunFam" id="2.10.240.10:FF:000001">
    <property type="entry name" value="Dihydroorotate dehydrogenase B (NAD(+)), electron transfer subunit"/>
    <property type="match status" value="1"/>
</dbReference>
<dbReference type="Gene3D" id="2.10.240.10">
    <property type="entry name" value="Dihydroorotate dehydrogenase, electron transfer subunit"/>
    <property type="match status" value="1"/>
</dbReference>
<dbReference type="Gene3D" id="3.40.50.80">
    <property type="entry name" value="Nucleotide-binding domain of ferredoxin-NADP reductase (FNR) module"/>
    <property type="match status" value="1"/>
</dbReference>
<dbReference type="Gene3D" id="2.40.30.10">
    <property type="entry name" value="Translation factors"/>
    <property type="match status" value="1"/>
</dbReference>
<dbReference type="HAMAP" id="MF_01211">
    <property type="entry name" value="DHODB_Fe_S_bind"/>
    <property type="match status" value="1"/>
</dbReference>
<dbReference type="InterPro" id="IPR012165">
    <property type="entry name" value="Cyt_c3_hydrogenase_gsu"/>
</dbReference>
<dbReference type="InterPro" id="IPR037117">
    <property type="entry name" value="Dihydroorotate_DH_ele_sf"/>
</dbReference>
<dbReference type="InterPro" id="IPR019480">
    <property type="entry name" value="Dihydroorotate_DH_Fe-S-bd"/>
</dbReference>
<dbReference type="InterPro" id="IPR023455">
    <property type="entry name" value="Dihydroorotate_DHASE_ETsu"/>
</dbReference>
<dbReference type="InterPro" id="IPR017927">
    <property type="entry name" value="FAD-bd_FR_type"/>
</dbReference>
<dbReference type="InterPro" id="IPR039261">
    <property type="entry name" value="FNR_nucleotide-bd"/>
</dbReference>
<dbReference type="InterPro" id="IPR001433">
    <property type="entry name" value="OxRdtase_FAD/NAD-bd"/>
</dbReference>
<dbReference type="InterPro" id="IPR050353">
    <property type="entry name" value="PyrK_electron_transfer"/>
</dbReference>
<dbReference type="InterPro" id="IPR017938">
    <property type="entry name" value="Riboflavin_synthase-like_b-brl"/>
</dbReference>
<dbReference type="NCBIfam" id="NF000797">
    <property type="entry name" value="PRK00054.1-2"/>
    <property type="match status" value="1"/>
</dbReference>
<dbReference type="PANTHER" id="PTHR43513">
    <property type="entry name" value="DIHYDROOROTATE DEHYDROGENASE B (NAD(+)), ELECTRON TRANSFER SUBUNIT"/>
    <property type="match status" value="1"/>
</dbReference>
<dbReference type="PANTHER" id="PTHR43513:SF3">
    <property type="entry name" value="DIHYDROOROTATE DEHYDROGENASE B (NAD(+)), ELECTRON TRANSFER SUBUNIT-RELATED"/>
    <property type="match status" value="1"/>
</dbReference>
<dbReference type="Pfam" id="PF10418">
    <property type="entry name" value="DHODB_Fe-S_bind"/>
    <property type="match status" value="1"/>
</dbReference>
<dbReference type="Pfam" id="PF00175">
    <property type="entry name" value="NAD_binding_1"/>
    <property type="match status" value="1"/>
</dbReference>
<dbReference type="PIRSF" id="PIRSF006816">
    <property type="entry name" value="Cyc3_hyd_g"/>
    <property type="match status" value="1"/>
</dbReference>
<dbReference type="SUPFAM" id="SSF52343">
    <property type="entry name" value="Ferredoxin reductase-like, C-terminal NADP-linked domain"/>
    <property type="match status" value="1"/>
</dbReference>
<dbReference type="SUPFAM" id="SSF63380">
    <property type="entry name" value="Riboflavin synthase domain-like"/>
    <property type="match status" value="1"/>
</dbReference>
<dbReference type="PROSITE" id="PS51384">
    <property type="entry name" value="FAD_FR"/>
    <property type="match status" value="1"/>
</dbReference>
<reference key="1">
    <citation type="journal article" date="2006" name="Proc. Natl. Acad. Sci. U.S.A.">
        <title>Comparative genomics of the lactic acid bacteria.</title>
        <authorList>
            <person name="Makarova K.S."/>
            <person name="Slesarev A."/>
            <person name="Wolf Y.I."/>
            <person name="Sorokin A."/>
            <person name="Mirkin B."/>
            <person name="Koonin E.V."/>
            <person name="Pavlov A."/>
            <person name="Pavlova N."/>
            <person name="Karamychev V."/>
            <person name="Polouchine N."/>
            <person name="Shakhova V."/>
            <person name="Grigoriev I."/>
            <person name="Lou Y."/>
            <person name="Rohksar D."/>
            <person name="Lucas S."/>
            <person name="Huang K."/>
            <person name="Goodstein D.M."/>
            <person name="Hawkins T."/>
            <person name="Plengvidhya V."/>
            <person name="Welker D."/>
            <person name="Hughes J."/>
            <person name="Goh Y."/>
            <person name="Benson A."/>
            <person name="Baldwin K."/>
            <person name="Lee J.-H."/>
            <person name="Diaz-Muniz I."/>
            <person name="Dosti B."/>
            <person name="Smeianov V."/>
            <person name="Wechter W."/>
            <person name="Barabote R."/>
            <person name="Lorca G."/>
            <person name="Altermann E."/>
            <person name="Barrangou R."/>
            <person name="Ganesan B."/>
            <person name="Xie Y."/>
            <person name="Rawsthorne H."/>
            <person name="Tamir D."/>
            <person name="Parker C."/>
            <person name="Breidt F."/>
            <person name="Broadbent J.R."/>
            <person name="Hutkins R."/>
            <person name="O'Sullivan D."/>
            <person name="Steele J."/>
            <person name="Unlu G."/>
            <person name="Saier M.H. Jr."/>
            <person name="Klaenhammer T."/>
            <person name="Richardson P."/>
            <person name="Kozyavkin S."/>
            <person name="Weimer B.C."/>
            <person name="Mills D.A."/>
        </authorList>
    </citation>
    <scope>NUCLEOTIDE SEQUENCE [LARGE SCALE GENOMIC DNA]</scope>
    <source>
        <strain>SK11</strain>
    </source>
</reference>
<protein>
    <recommendedName>
        <fullName evidence="1">Dihydroorotate dehydrogenase B (NAD(+)), electron transfer subunit</fullName>
    </recommendedName>
    <alternativeName>
        <fullName evidence="1">Dihydroorotate oxidase B, electron transfer subunit</fullName>
    </alternativeName>
</protein>
<gene>
    <name evidence="1" type="primary">pyrK</name>
    <name type="ordered locus">LACR_1470</name>
</gene>